<accession>A1L2P5</accession>
<keyword id="KW-0217">Developmental protein</keyword>
<keyword id="KW-0238">DNA-binding</keyword>
<keyword id="KW-0371">Homeobox</keyword>
<keyword id="KW-0539">Nucleus</keyword>
<keyword id="KW-1185">Reference proteome</keyword>
<keyword id="KW-0804">Transcription</keyword>
<keyword id="KW-0805">Transcription regulation</keyword>
<comment type="function">
    <text evidence="1">Sequence-specific transcription factor which is part of a developmental regulatory system that provides cells with specific positional identities on the anterior-posterior axis.</text>
</comment>
<comment type="subcellular location">
    <subcellularLocation>
        <location evidence="2">Nucleus</location>
    </subcellularLocation>
</comment>
<comment type="similarity">
    <text evidence="4">Belongs to the Antp homeobox family.</text>
</comment>
<comment type="caution">
    <text evidence="4">It is uncertain whether Met-1 or Met-17 is the initiator.</text>
</comment>
<protein>
    <recommendedName>
        <fullName>Homeobox protein Hox-D3</fullName>
    </recommendedName>
</protein>
<name>HXD3_XENLA</name>
<organism>
    <name type="scientific">Xenopus laevis</name>
    <name type="common">African clawed frog</name>
    <dbReference type="NCBI Taxonomy" id="8355"/>
    <lineage>
        <taxon>Eukaryota</taxon>
        <taxon>Metazoa</taxon>
        <taxon>Chordata</taxon>
        <taxon>Craniata</taxon>
        <taxon>Vertebrata</taxon>
        <taxon>Euteleostomi</taxon>
        <taxon>Amphibia</taxon>
        <taxon>Batrachia</taxon>
        <taxon>Anura</taxon>
        <taxon>Pipoidea</taxon>
        <taxon>Pipidae</taxon>
        <taxon>Xenopodinae</taxon>
        <taxon>Xenopus</taxon>
        <taxon>Xenopus</taxon>
    </lineage>
</organism>
<proteinExistence type="evidence at transcript level"/>
<evidence type="ECO:0000250" key="1"/>
<evidence type="ECO:0000255" key="2">
    <source>
        <dbReference type="PROSITE-ProRule" id="PRU00108"/>
    </source>
</evidence>
<evidence type="ECO:0000256" key="3">
    <source>
        <dbReference type="SAM" id="MobiDB-lite"/>
    </source>
</evidence>
<evidence type="ECO:0000305" key="4"/>
<sequence>MFIDKGASPLPIREAKMQKTAYYENSGLFGGYTYAKPESYSYGPSQQQYPQSSLDNDYPSTACSVQPAAIRAPNHKTNDISNSCMRTTSSQNSNQTPSISNQQHQAPSLPPSSPSHSNTSAQKKSKSSNSSGSSQSTMNKQIFPWMKESRQNSKQKNSSSTPPAGENCEEKSPTGPSSKRVRTAYTSAQLVELEKEFHFNRYLCRPRRVEMANLLNLTERQIKIWFQNRRMKYKKDQKAKGIMHSPTGQSPDRSPPLSGPNLVGYSSQLPTVNSLSYDAPSPTSFAKSQQNMYGLAAYTAPLSSCLPQQKRYPGAEYEHHTMQGNSGFANPNLQGSPVYVGGNFVDSMPASGPMFNVGHLSHPSSASVDYSCAAQIPGNHHHGPCDPHPTYTDLSSHHTTQGRMQEAPKLTHL</sequence>
<gene>
    <name type="primary">hoxd3</name>
</gene>
<reference key="1">
    <citation type="submission" date="2006-12" db="EMBL/GenBank/DDBJ databases">
        <authorList>
            <consortium name="NIH - Xenopus Gene Collection (XGC) project"/>
        </authorList>
    </citation>
    <scope>NUCLEOTIDE SEQUENCE [LARGE SCALE MRNA]</scope>
    <source>
        <tissue>Forelimb</tissue>
        <tissue>Hind limb</tissue>
    </source>
</reference>
<feature type="chain" id="PRO_0000363948" description="Homeobox protein Hox-D3">
    <location>
        <begin position="1"/>
        <end position="413"/>
    </location>
</feature>
<feature type="DNA-binding region" description="Homeobox" evidence="2">
    <location>
        <begin position="178"/>
        <end position="237"/>
    </location>
</feature>
<feature type="region of interest" description="Disordered" evidence="3">
    <location>
        <begin position="36"/>
        <end position="181"/>
    </location>
</feature>
<feature type="region of interest" description="Disordered" evidence="3">
    <location>
        <begin position="236"/>
        <end position="265"/>
    </location>
</feature>
<feature type="region of interest" description="Disordered" evidence="3">
    <location>
        <begin position="381"/>
        <end position="413"/>
    </location>
</feature>
<feature type="short sequence motif" description="Antp-type hexapeptide">
    <location>
        <begin position="142"/>
        <end position="147"/>
    </location>
</feature>
<feature type="compositionally biased region" description="Low complexity" evidence="3">
    <location>
        <begin position="37"/>
        <end position="53"/>
    </location>
</feature>
<feature type="compositionally biased region" description="Polar residues" evidence="3">
    <location>
        <begin position="54"/>
        <end position="64"/>
    </location>
</feature>
<feature type="compositionally biased region" description="Low complexity" evidence="3">
    <location>
        <begin position="87"/>
        <end position="107"/>
    </location>
</feature>
<feature type="compositionally biased region" description="Low complexity" evidence="3">
    <location>
        <begin position="114"/>
        <end position="141"/>
    </location>
</feature>
<feature type="compositionally biased region" description="Polar residues" evidence="3">
    <location>
        <begin position="392"/>
        <end position="403"/>
    </location>
</feature>
<dbReference type="EMBL" id="BC129640">
    <property type="protein sequence ID" value="AAI29641.1"/>
    <property type="molecule type" value="mRNA"/>
</dbReference>
<dbReference type="RefSeq" id="NP_001091156.1">
    <property type="nucleotide sequence ID" value="NM_001097687.1"/>
</dbReference>
<dbReference type="RefSeq" id="XP_018089363.1">
    <property type="nucleotide sequence ID" value="XM_018233874.1"/>
</dbReference>
<dbReference type="RefSeq" id="XP_018089364.1">
    <property type="nucleotide sequence ID" value="XM_018233875.1"/>
</dbReference>
<dbReference type="SMR" id="A1L2P5"/>
<dbReference type="GeneID" id="100036911"/>
<dbReference type="KEGG" id="xla:100036911"/>
<dbReference type="AGR" id="Xenbase:XB-GENE-865180"/>
<dbReference type="CTD" id="100036911"/>
<dbReference type="Xenbase" id="XB-GENE-865180">
    <property type="gene designation" value="hoxd3.L"/>
</dbReference>
<dbReference type="OrthoDB" id="6159439at2759"/>
<dbReference type="Proteomes" id="UP000186698">
    <property type="component" value="Chromosome 9_10L"/>
</dbReference>
<dbReference type="Bgee" id="100036911">
    <property type="expression patterns" value="Expressed in neurula embryo and 4 other cell types or tissues"/>
</dbReference>
<dbReference type="GO" id="GO:0005634">
    <property type="term" value="C:nucleus"/>
    <property type="evidence" value="ECO:0000318"/>
    <property type="project" value="GO_Central"/>
</dbReference>
<dbReference type="GO" id="GO:0000981">
    <property type="term" value="F:DNA-binding transcription factor activity, RNA polymerase II-specific"/>
    <property type="evidence" value="ECO:0000318"/>
    <property type="project" value="GO_Central"/>
</dbReference>
<dbReference type="GO" id="GO:0000978">
    <property type="term" value="F:RNA polymerase II cis-regulatory region sequence-specific DNA binding"/>
    <property type="evidence" value="ECO:0000318"/>
    <property type="project" value="GO_Central"/>
</dbReference>
<dbReference type="GO" id="GO:0009952">
    <property type="term" value="P:anterior/posterior pattern specification"/>
    <property type="evidence" value="ECO:0000318"/>
    <property type="project" value="GO_Central"/>
</dbReference>
<dbReference type="GO" id="GO:0048704">
    <property type="term" value="P:embryonic skeletal system morphogenesis"/>
    <property type="evidence" value="ECO:0000318"/>
    <property type="project" value="GO_Central"/>
</dbReference>
<dbReference type="GO" id="GO:0006357">
    <property type="term" value="P:regulation of transcription by RNA polymerase II"/>
    <property type="evidence" value="ECO:0000318"/>
    <property type="project" value="GO_Central"/>
</dbReference>
<dbReference type="CDD" id="cd00086">
    <property type="entry name" value="homeodomain"/>
    <property type="match status" value="1"/>
</dbReference>
<dbReference type="FunFam" id="1.10.10.60:FF:000094">
    <property type="entry name" value="Homeobox protein Hox-A3"/>
    <property type="match status" value="1"/>
</dbReference>
<dbReference type="Gene3D" id="1.10.10.60">
    <property type="entry name" value="Homeodomain-like"/>
    <property type="match status" value="1"/>
</dbReference>
<dbReference type="InterPro" id="IPR025281">
    <property type="entry name" value="DUF4074"/>
</dbReference>
<dbReference type="InterPro" id="IPR001356">
    <property type="entry name" value="HD"/>
</dbReference>
<dbReference type="InterPro" id="IPR020479">
    <property type="entry name" value="HD_metazoa"/>
</dbReference>
<dbReference type="InterPro" id="IPR001827">
    <property type="entry name" value="Homeobox_Antennapedia_CS"/>
</dbReference>
<dbReference type="InterPro" id="IPR017970">
    <property type="entry name" value="Homeobox_CS"/>
</dbReference>
<dbReference type="InterPro" id="IPR009057">
    <property type="entry name" value="Homeodomain-like_sf"/>
</dbReference>
<dbReference type="PANTHER" id="PTHR45664:SF5">
    <property type="entry name" value="HOMEOBOX PROTEIN HOX-D3"/>
    <property type="match status" value="1"/>
</dbReference>
<dbReference type="PANTHER" id="PTHR45664">
    <property type="entry name" value="PROTEIN ZERKNUELLT 1-RELATED"/>
    <property type="match status" value="1"/>
</dbReference>
<dbReference type="Pfam" id="PF13293">
    <property type="entry name" value="DUF4074"/>
    <property type="match status" value="1"/>
</dbReference>
<dbReference type="Pfam" id="PF00046">
    <property type="entry name" value="Homeodomain"/>
    <property type="match status" value="1"/>
</dbReference>
<dbReference type="PRINTS" id="PR00024">
    <property type="entry name" value="HOMEOBOX"/>
</dbReference>
<dbReference type="SMART" id="SM00389">
    <property type="entry name" value="HOX"/>
    <property type="match status" value="1"/>
</dbReference>
<dbReference type="SUPFAM" id="SSF46689">
    <property type="entry name" value="Homeodomain-like"/>
    <property type="match status" value="1"/>
</dbReference>
<dbReference type="PROSITE" id="PS00032">
    <property type="entry name" value="ANTENNAPEDIA"/>
    <property type="match status" value="1"/>
</dbReference>
<dbReference type="PROSITE" id="PS00027">
    <property type="entry name" value="HOMEOBOX_1"/>
    <property type="match status" value="1"/>
</dbReference>
<dbReference type="PROSITE" id="PS50071">
    <property type="entry name" value="HOMEOBOX_2"/>
    <property type="match status" value="1"/>
</dbReference>